<dbReference type="EMBL" id="U10397">
    <property type="protein sequence ID" value="AAB68980.1"/>
    <property type="molecule type" value="Genomic_DNA"/>
</dbReference>
<dbReference type="EMBL" id="BK006934">
    <property type="protein sequence ID" value="DAA06843.1"/>
    <property type="molecule type" value="Genomic_DNA"/>
</dbReference>
<dbReference type="PIR" id="S46757">
    <property type="entry name" value="S46757"/>
</dbReference>
<dbReference type="RefSeq" id="NP_012020.1">
    <property type="nucleotide sequence ID" value="NM_001179281.1"/>
</dbReference>
<dbReference type="BioGRID" id="36584">
    <property type="interactions" value="63"/>
</dbReference>
<dbReference type="FunCoup" id="P38848">
    <property type="interactions" value="44"/>
</dbReference>
<dbReference type="IntAct" id="P38848">
    <property type="interactions" value="2"/>
</dbReference>
<dbReference type="STRING" id="4932.YHR150W"/>
<dbReference type="TCDB" id="3.A.20.1.5">
    <property type="family name" value="the peroxisomal protein importer (ppi) family"/>
</dbReference>
<dbReference type="GlyCosmos" id="P38848">
    <property type="glycosylation" value="1 site, No reported glycans"/>
</dbReference>
<dbReference type="GlyGen" id="P38848">
    <property type="glycosylation" value="1 site"/>
</dbReference>
<dbReference type="iPTMnet" id="P38848"/>
<dbReference type="PaxDb" id="4932-YHR150W"/>
<dbReference type="PeptideAtlas" id="P38848"/>
<dbReference type="EnsemblFungi" id="YHR150W_mRNA">
    <property type="protein sequence ID" value="YHR150W"/>
    <property type="gene ID" value="YHR150W"/>
</dbReference>
<dbReference type="GeneID" id="856555"/>
<dbReference type="KEGG" id="sce:YHR150W"/>
<dbReference type="AGR" id="SGD:S000001193"/>
<dbReference type="SGD" id="S000001193">
    <property type="gene designation" value="PEX28"/>
</dbReference>
<dbReference type="VEuPathDB" id="FungiDB:YHR150W"/>
<dbReference type="eggNOG" id="ENOG502QUW8">
    <property type="taxonomic scope" value="Eukaryota"/>
</dbReference>
<dbReference type="HOGENOM" id="CLU_034954_0_0_1"/>
<dbReference type="InParanoid" id="P38848"/>
<dbReference type="OMA" id="WRLIFIQ"/>
<dbReference type="OrthoDB" id="74314at2759"/>
<dbReference type="BioCyc" id="YEAST:G3O-31185-MONOMER"/>
<dbReference type="BioGRID-ORCS" id="856555">
    <property type="hits" value="0 hits in 10 CRISPR screens"/>
</dbReference>
<dbReference type="PRO" id="PR:P38848"/>
<dbReference type="Proteomes" id="UP000002311">
    <property type="component" value="Chromosome VIII"/>
</dbReference>
<dbReference type="RNAct" id="P38848">
    <property type="molecule type" value="protein"/>
</dbReference>
<dbReference type="GO" id="GO:0005829">
    <property type="term" value="C:cytosol"/>
    <property type="evidence" value="ECO:0007005"/>
    <property type="project" value="SGD"/>
</dbReference>
<dbReference type="GO" id="GO:0005778">
    <property type="term" value="C:peroxisomal membrane"/>
    <property type="evidence" value="ECO:0000314"/>
    <property type="project" value="SGD"/>
</dbReference>
<dbReference type="GO" id="GO:0007031">
    <property type="term" value="P:peroxisome organization"/>
    <property type="evidence" value="ECO:0000314"/>
    <property type="project" value="SGD"/>
</dbReference>
<dbReference type="InterPro" id="IPR052816">
    <property type="entry name" value="Peroxisomal_Membrane_PEX28-32"/>
</dbReference>
<dbReference type="InterPro" id="IPR010482">
    <property type="entry name" value="TECPR1-like_DysF"/>
</dbReference>
<dbReference type="PANTHER" id="PTHR28304:SF1">
    <property type="entry name" value="PEROXISOMAL MEMBRANE PROTEIN PEX28"/>
    <property type="match status" value="1"/>
</dbReference>
<dbReference type="PANTHER" id="PTHR28304">
    <property type="entry name" value="PEROXISOMAL MEMBRANE PROTEIN PEX29"/>
    <property type="match status" value="1"/>
</dbReference>
<dbReference type="Pfam" id="PF06398">
    <property type="entry name" value="Pex24p"/>
    <property type="match status" value="1"/>
</dbReference>
<comment type="function">
    <text evidence="3">Involved in the regulation of peroxisome number, size and distribution.</text>
</comment>
<comment type="subcellular location">
    <subcellularLocation>
        <location evidence="3">Peroxisome membrane</location>
        <topology evidence="3">Multi-pass membrane protein</topology>
    </subcellularLocation>
</comment>
<comment type="similarity">
    <text evidence="4">Belongs to the PEX28-32 family. Peroxin-28 subfamily.</text>
</comment>
<accession>P38848</accession>
<accession>D3DL99</accession>
<organism>
    <name type="scientific">Saccharomyces cerevisiae (strain ATCC 204508 / S288c)</name>
    <name type="common">Baker's yeast</name>
    <dbReference type="NCBI Taxonomy" id="559292"/>
    <lineage>
        <taxon>Eukaryota</taxon>
        <taxon>Fungi</taxon>
        <taxon>Dikarya</taxon>
        <taxon>Ascomycota</taxon>
        <taxon>Saccharomycotina</taxon>
        <taxon>Saccharomycetes</taxon>
        <taxon>Saccharomycetales</taxon>
        <taxon>Saccharomycetaceae</taxon>
        <taxon>Saccharomyces</taxon>
    </lineage>
</organism>
<reference key="1">
    <citation type="journal article" date="1994" name="Science">
        <title>Complete nucleotide sequence of Saccharomyces cerevisiae chromosome VIII.</title>
        <authorList>
            <person name="Johnston M."/>
            <person name="Andrews S."/>
            <person name="Brinkman R."/>
            <person name="Cooper J."/>
            <person name="Ding H."/>
            <person name="Dover J."/>
            <person name="Du Z."/>
            <person name="Favello A."/>
            <person name="Fulton L."/>
            <person name="Gattung S."/>
            <person name="Geisel C."/>
            <person name="Kirsten J."/>
            <person name="Kucaba T."/>
            <person name="Hillier L.W."/>
            <person name="Jier M."/>
            <person name="Johnston L."/>
            <person name="Langston Y."/>
            <person name="Latreille P."/>
            <person name="Louis E.J."/>
            <person name="Macri C."/>
            <person name="Mardis E."/>
            <person name="Menezes S."/>
            <person name="Mouser L."/>
            <person name="Nhan M."/>
            <person name="Rifkin L."/>
            <person name="Riles L."/>
            <person name="St Peter H."/>
            <person name="Trevaskis E."/>
            <person name="Vaughan K."/>
            <person name="Vignati D."/>
            <person name="Wilcox L."/>
            <person name="Wohldman P."/>
            <person name="Waterston R."/>
            <person name="Wilson R."/>
            <person name="Vaudin M."/>
        </authorList>
    </citation>
    <scope>NUCLEOTIDE SEQUENCE [LARGE SCALE GENOMIC DNA]</scope>
    <source>
        <strain>ATCC 204508 / S288c</strain>
    </source>
</reference>
<reference key="2">
    <citation type="journal article" date="2014" name="G3 (Bethesda)">
        <title>The reference genome sequence of Saccharomyces cerevisiae: Then and now.</title>
        <authorList>
            <person name="Engel S.R."/>
            <person name="Dietrich F.S."/>
            <person name="Fisk D.G."/>
            <person name="Binkley G."/>
            <person name="Balakrishnan R."/>
            <person name="Costanzo M.C."/>
            <person name="Dwight S.S."/>
            <person name="Hitz B.C."/>
            <person name="Karra K."/>
            <person name="Nash R.S."/>
            <person name="Weng S."/>
            <person name="Wong E.D."/>
            <person name="Lloyd P."/>
            <person name="Skrzypek M.S."/>
            <person name="Miyasato S.R."/>
            <person name="Simison M."/>
            <person name="Cherry J.M."/>
        </authorList>
    </citation>
    <scope>GENOME REANNOTATION</scope>
    <source>
        <strain>ATCC 204508 / S288c</strain>
    </source>
</reference>
<reference key="3">
    <citation type="journal article" date="2003" name="J. Cell Biol.">
        <title>YHR150w and YDR479c encode peroxisomal integral membrane proteins involved in the regulation of peroxisome number, size, and distribution in Saccharomyces cerevisiae.</title>
        <authorList>
            <person name="Vizeacoumar F.J."/>
            <person name="Torres-Guzman J.C."/>
            <person name="Tam Y.Y.C."/>
            <person name="Aitchison J.D."/>
            <person name="Rachubinski R.A."/>
        </authorList>
    </citation>
    <scope>FUNCTION</scope>
    <scope>SUBCELLULAR LOCATION</scope>
</reference>
<reference key="4">
    <citation type="journal article" date="2006" name="Proc. Natl. Acad. Sci. U.S.A.">
        <title>A global topology map of the Saccharomyces cerevisiae membrane proteome.</title>
        <authorList>
            <person name="Kim H."/>
            <person name="Melen K."/>
            <person name="Oesterberg M."/>
            <person name="von Heijne G."/>
        </authorList>
    </citation>
    <scope>TOPOLOGY [LARGE SCALE ANALYSIS]</scope>
    <source>
        <strain>ATCC 208353 / W303-1A</strain>
    </source>
</reference>
<proteinExistence type="evidence at protein level"/>
<protein>
    <recommendedName>
        <fullName>Peroxisomal membrane protein PEX28</fullName>
    </recommendedName>
    <alternativeName>
        <fullName>Peroxin-28</fullName>
    </alternativeName>
</protein>
<sequence length="579" mass="66148">MSETSSSRRSASKDAVKSYFAGKYNKVLDSILEAEAAISKSPTVAEDLSGSSSSGNSEMSHPSLTASSATSQGISKKELLQQIAGSLFSTSIERLKTAHSSEVSSTPEYSVNDSYGEQECRECDGVFKCSAHFEGAPEYYDDETESGPALEPMTSNSEKDPFIDVFLDKLISRLVPEKLPEREHFSSKTTIEHDLDTGRVPVFSATTLGSNFKKLSKKMGSIFELQDSIVRLLTWRNPTGTVTSLILFTLICFNPMYLVILPIFRFVYGIVVPGYVRKHPLQRSIYPLKRNHGSSLLYDVCYEGKNEYSYGQQFFSKSFMDTLESRNQEIDEISELDKRTENTGELKQGMKVLINLRDMQNMTSGTLHVIEAINSFLRKSSSFQNEECSTKRFFTGFLLIVFLKILSPFVNWSYVCSIFAWCLLIYMHPRAHPKIISFFKTGTMGKEYKNLKKREHQALNMIFDEQPETKFIEIFEIYKKALLPNDWKFFRYSNRIFDPQDPYRRAQQFPPGVDSLADVIPPTGWSFDPNFEWKIDNDVDRWVVERGLNLPITGEFLFDPMFKRRRLIHRVIKNATPVA</sequence>
<gene>
    <name type="primary">PEX28</name>
    <name type="ordered locus">YHR150W</name>
</gene>
<name>PEX28_YEAST</name>
<evidence type="ECO:0000255" key="1"/>
<evidence type="ECO:0000256" key="2">
    <source>
        <dbReference type="SAM" id="MobiDB-lite"/>
    </source>
</evidence>
<evidence type="ECO:0000269" key="3">
    <source>
    </source>
</evidence>
<evidence type="ECO:0000305" key="4"/>
<keyword id="KW-0325">Glycoprotein</keyword>
<keyword id="KW-0472">Membrane</keyword>
<keyword id="KW-0576">Peroxisome</keyword>
<keyword id="KW-0962">Peroxisome biogenesis</keyword>
<keyword id="KW-1185">Reference proteome</keyword>
<keyword id="KW-0812">Transmembrane</keyword>
<keyword id="KW-1133">Transmembrane helix</keyword>
<feature type="chain" id="PRO_0000202925" description="Peroxisomal membrane protein PEX28">
    <location>
        <begin position="1"/>
        <end position="579"/>
    </location>
</feature>
<feature type="topological domain" description="Cytoplasmic" evidence="1">
    <location>
        <begin position="1"/>
        <end position="243"/>
    </location>
</feature>
<feature type="transmembrane region" description="Helical" evidence="1">
    <location>
        <begin position="244"/>
        <end position="264"/>
    </location>
</feature>
<feature type="topological domain" description="Peroxisomal" evidence="1">
    <location>
        <begin position="265"/>
        <end position="392"/>
    </location>
</feature>
<feature type="transmembrane region" description="Helical" evidence="1">
    <location>
        <begin position="393"/>
        <end position="413"/>
    </location>
</feature>
<feature type="topological domain" description="Cytoplasmic" evidence="1">
    <location>
        <begin position="414"/>
        <end position="579"/>
    </location>
</feature>
<feature type="region of interest" description="Disordered" evidence="2">
    <location>
        <begin position="40"/>
        <end position="70"/>
    </location>
</feature>
<feature type="compositionally biased region" description="Low complexity" evidence="2">
    <location>
        <begin position="49"/>
        <end position="63"/>
    </location>
</feature>
<feature type="glycosylation site" description="N-linked (GlcNAc...) asparagine" evidence="1">
    <location>
        <position position="361"/>
    </location>
</feature>